<reference key="1">
    <citation type="journal article" date="2007" name="Mol. Phylogenet. Evol.">
        <title>The complete mitochondrial genome of Scutigerella causeyae (Myriapoda: Symphyla) and the phylogenetic position of Symphyla.</title>
        <authorList>
            <person name="Podsiadlowski L."/>
            <person name="Kohlhagen H."/>
            <person name="Koch M."/>
        </authorList>
    </citation>
    <scope>NUCLEOTIDE SEQUENCE [GENOMIC DNA]</scope>
</reference>
<dbReference type="EMBL" id="DQ666064">
    <property type="protein sequence ID" value="ABF93298.1"/>
    <property type="molecule type" value="Genomic_DNA"/>
</dbReference>
<dbReference type="RefSeq" id="YP_001083081.1">
    <property type="nucleotide sequence ID" value="NC_009082.1"/>
</dbReference>
<dbReference type="SMR" id="A3QU28"/>
<dbReference type="GeneID" id="4910465"/>
<dbReference type="CTD" id="4519"/>
<dbReference type="GO" id="GO:0005743">
    <property type="term" value="C:mitochondrial inner membrane"/>
    <property type="evidence" value="ECO:0007669"/>
    <property type="project" value="UniProtKB-SubCell"/>
</dbReference>
<dbReference type="GO" id="GO:0045275">
    <property type="term" value="C:respiratory chain complex III"/>
    <property type="evidence" value="ECO:0007669"/>
    <property type="project" value="InterPro"/>
</dbReference>
<dbReference type="GO" id="GO:0046872">
    <property type="term" value="F:metal ion binding"/>
    <property type="evidence" value="ECO:0007669"/>
    <property type="project" value="UniProtKB-KW"/>
</dbReference>
<dbReference type="GO" id="GO:0008121">
    <property type="term" value="F:ubiquinol-cytochrome-c reductase activity"/>
    <property type="evidence" value="ECO:0007669"/>
    <property type="project" value="InterPro"/>
</dbReference>
<dbReference type="GO" id="GO:0006122">
    <property type="term" value="P:mitochondrial electron transport, ubiquinol to cytochrome c"/>
    <property type="evidence" value="ECO:0007669"/>
    <property type="project" value="TreeGrafter"/>
</dbReference>
<dbReference type="CDD" id="cd00290">
    <property type="entry name" value="cytochrome_b_C"/>
    <property type="match status" value="1"/>
</dbReference>
<dbReference type="CDD" id="cd00284">
    <property type="entry name" value="Cytochrome_b_N"/>
    <property type="match status" value="1"/>
</dbReference>
<dbReference type="FunFam" id="1.20.810.10:FF:000002">
    <property type="entry name" value="Cytochrome b"/>
    <property type="match status" value="1"/>
</dbReference>
<dbReference type="Gene3D" id="1.20.810.10">
    <property type="entry name" value="Cytochrome Bc1 Complex, Chain C"/>
    <property type="match status" value="1"/>
</dbReference>
<dbReference type="InterPro" id="IPR005798">
    <property type="entry name" value="Cyt_b/b6_C"/>
</dbReference>
<dbReference type="InterPro" id="IPR036150">
    <property type="entry name" value="Cyt_b/b6_C_sf"/>
</dbReference>
<dbReference type="InterPro" id="IPR005797">
    <property type="entry name" value="Cyt_b/b6_N"/>
</dbReference>
<dbReference type="InterPro" id="IPR027387">
    <property type="entry name" value="Cytb/b6-like_sf"/>
</dbReference>
<dbReference type="InterPro" id="IPR030689">
    <property type="entry name" value="Cytochrome_b"/>
</dbReference>
<dbReference type="InterPro" id="IPR048260">
    <property type="entry name" value="Cytochrome_b_C_euk/bac"/>
</dbReference>
<dbReference type="InterPro" id="IPR048259">
    <property type="entry name" value="Cytochrome_b_N_euk/bac"/>
</dbReference>
<dbReference type="InterPro" id="IPR016174">
    <property type="entry name" value="Di-haem_cyt_TM"/>
</dbReference>
<dbReference type="PANTHER" id="PTHR19271">
    <property type="entry name" value="CYTOCHROME B"/>
    <property type="match status" value="1"/>
</dbReference>
<dbReference type="PANTHER" id="PTHR19271:SF16">
    <property type="entry name" value="CYTOCHROME B"/>
    <property type="match status" value="1"/>
</dbReference>
<dbReference type="Pfam" id="PF00032">
    <property type="entry name" value="Cytochrom_B_C"/>
    <property type="match status" value="1"/>
</dbReference>
<dbReference type="Pfam" id="PF00033">
    <property type="entry name" value="Cytochrome_B"/>
    <property type="match status" value="1"/>
</dbReference>
<dbReference type="PIRSF" id="PIRSF038885">
    <property type="entry name" value="COB"/>
    <property type="match status" value="1"/>
</dbReference>
<dbReference type="SUPFAM" id="SSF81648">
    <property type="entry name" value="a domain/subunit of cytochrome bc1 complex (Ubiquinol-cytochrome c reductase)"/>
    <property type="match status" value="1"/>
</dbReference>
<dbReference type="SUPFAM" id="SSF81342">
    <property type="entry name" value="Transmembrane di-heme cytochromes"/>
    <property type="match status" value="1"/>
</dbReference>
<dbReference type="PROSITE" id="PS51003">
    <property type="entry name" value="CYTB_CTER"/>
    <property type="match status" value="1"/>
</dbReference>
<dbReference type="PROSITE" id="PS51002">
    <property type="entry name" value="CYTB_NTER"/>
    <property type="match status" value="1"/>
</dbReference>
<proteinExistence type="inferred from homology"/>
<sequence>MMKPERKTHPLLMIINNSLIDLPTPSNISYLWNYGSLLGITLVFQIMTGIMLAMHYSDNMDLAFSSMIHISRDVNYGWMIRFFHGNGASFFFICLYVHIGRSIYYNSYKLNYTWNIGIIILLLTMATAFLGYVLPWGQMSFWGATVITNLLSAIPYIGMTIVNWLWGGFAVSNATLTRFFSLHFLLPFIISAMVMIHLLFLHQTGSNNPLGLNSNTDKIPFHQYFSIKDLITMMLFIMILSFLVLFSPNILGDPENYIPANPLVTPIHIQPEWYFLFAYAILRSIPNKLGGVIALLMSIMILFFLPIFSKNCFSTSFNKWSGMIFWSFINIIILLTWIGANPVEAPYIIFGQILSVLYFLTFFWMPYSMVLFQKIIELL</sequence>
<gene>
    <name type="primary">mt:Cyt-b</name>
    <name type="synonym">Cob</name>
    <name type="synonym">cytb</name>
</gene>
<keyword id="KW-0249">Electron transport</keyword>
<keyword id="KW-0349">Heme</keyword>
<keyword id="KW-0408">Iron</keyword>
<keyword id="KW-0472">Membrane</keyword>
<keyword id="KW-0479">Metal-binding</keyword>
<keyword id="KW-0496">Mitochondrion</keyword>
<keyword id="KW-0999">Mitochondrion inner membrane</keyword>
<keyword id="KW-0679">Respiratory chain</keyword>
<keyword id="KW-0812">Transmembrane</keyword>
<keyword id="KW-1133">Transmembrane helix</keyword>
<keyword id="KW-0813">Transport</keyword>
<keyword id="KW-0830">Ubiquinone</keyword>
<organism>
    <name type="scientific">Epiperipatus biolleyi</name>
    <name type="common">Velvet worm</name>
    <name type="synonym">Peripatus biolleyi</name>
    <dbReference type="NCBI Taxonomy" id="172520"/>
    <lineage>
        <taxon>Eukaryota</taxon>
        <taxon>Metazoa</taxon>
        <taxon>Ecdysozoa</taxon>
        <taxon>Onychophora</taxon>
        <taxon>Udeonychophora</taxon>
        <taxon>Euonychophora</taxon>
        <taxon>Peripatidae</taxon>
        <taxon>Epiperipatus</taxon>
    </lineage>
</organism>
<protein>
    <recommendedName>
        <fullName>Cytochrome b</fullName>
    </recommendedName>
    <alternativeName>
        <fullName>Complex III subunit 3</fullName>
    </alternativeName>
    <alternativeName>
        <fullName>Complex III subunit III</fullName>
    </alternativeName>
    <alternativeName>
        <fullName>Cytochrome b-c1 complex subunit 3</fullName>
    </alternativeName>
    <alternativeName>
        <fullName>Ubiquinol-cytochrome-c reductase complex cytochrome b subunit</fullName>
    </alternativeName>
</protein>
<accession>A3QU28</accession>
<feature type="chain" id="PRO_0000357460" description="Cytochrome b">
    <location>
        <begin position="1"/>
        <end position="379"/>
    </location>
</feature>
<feature type="transmembrane region" description="Helical" evidence="3">
    <location>
        <begin position="34"/>
        <end position="54"/>
    </location>
</feature>
<feature type="transmembrane region" description="Helical" evidence="3">
    <location>
        <begin position="78"/>
        <end position="100"/>
    </location>
</feature>
<feature type="transmembrane region" description="Helical" evidence="3">
    <location>
        <begin position="113"/>
        <end position="133"/>
    </location>
</feature>
<feature type="transmembrane region" description="Helical" evidence="3">
    <location>
        <begin position="179"/>
        <end position="199"/>
    </location>
</feature>
<feature type="transmembrane region" description="Helical" evidence="3">
    <location>
        <begin position="225"/>
        <end position="245"/>
    </location>
</feature>
<feature type="transmembrane region" description="Helical" evidence="4">
    <location>
        <begin position="289"/>
        <end position="309"/>
    </location>
</feature>
<feature type="transmembrane region" description="Helical" evidence="4">
    <location>
        <begin position="320"/>
        <end position="340"/>
    </location>
</feature>
<feature type="transmembrane region" description="Helical" evidence="4">
    <location>
        <begin position="345"/>
        <end position="365"/>
    </location>
</feature>
<feature type="binding site" description="axial binding residue" evidence="3">
    <location>
        <position position="84"/>
    </location>
    <ligand>
        <name>heme b</name>
        <dbReference type="ChEBI" id="CHEBI:60344"/>
        <label>b562</label>
    </ligand>
    <ligandPart>
        <name>Fe</name>
        <dbReference type="ChEBI" id="CHEBI:18248"/>
    </ligandPart>
</feature>
<feature type="binding site" description="axial binding residue" evidence="3">
    <location>
        <position position="98"/>
    </location>
    <ligand>
        <name>heme b</name>
        <dbReference type="ChEBI" id="CHEBI:60344"/>
        <label>b566</label>
    </ligand>
    <ligandPart>
        <name>Fe</name>
        <dbReference type="ChEBI" id="CHEBI:18248"/>
    </ligandPart>
</feature>
<feature type="binding site" description="axial binding residue" evidence="3">
    <location>
        <position position="183"/>
    </location>
    <ligand>
        <name>heme b</name>
        <dbReference type="ChEBI" id="CHEBI:60344"/>
        <label>b562</label>
    </ligand>
    <ligandPart>
        <name>Fe</name>
        <dbReference type="ChEBI" id="CHEBI:18248"/>
    </ligandPart>
</feature>
<feature type="binding site" description="axial binding residue" evidence="3">
    <location>
        <position position="197"/>
    </location>
    <ligand>
        <name>heme b</name>
        <dbReference type="ChEBI" id="CHEBI:60344"/>
        <label>b566</label>
    </ligand>
    <ligandPart>
        <name>Fe</name>
        <dbReference type="ChEBI" id="CHEBI:18248"/>
    </ligandPart>
</feature>
<feature type="binding site" evidence="2">
    <location>
        <position position="202"/>
    </location>
    <ligand>
        <name>a ubiquinone</name>
        <dbReference type="ChEBI" id="CHEBI:16389"/>
    </ligand>
</feature>
<evidence type="ECO:0000250" key="1"/>
<evidence type="ECO:0000250" key="2">
    <source>
        <dbReference type="UniProtKB" id="P00157"/>
    </source>
</evidence>
<evidence type="ECO:0000250" key="3">
    <source>
        <dbReference type="UniProtKB" id="P00163"/>
    </source>
</evidence>
<evidence type="ECO:0000255" key="4"/>
<evidence type="ECO:0000255" key="5">
    <source>
        <dbReference type="PROSITE-ProRule" id="PRU00967"/>
    </source>
</evidence>
<evidence type="ECO:0000255" key="6">
    <source>
        <dbReference type="PROSITE-ProRule" id="PRU00968"/>
    </source>
</evidence>
<geneLocation type="mitochondrion"/>
<comment type="function">
    <text evidence="3">Component of the ubiquinol-cytochrome c reductase complex (complex III or cytochrome b-c1 complex) that is part of the mitochondrial respiratory chain. The b-c1 complex mediates electron transfer from ubiquinol to cytochrome c. Contributes to the generation of a proton gradient across the mitochondrial membrane that is then used for ATP synthesis.</text>
</comment>
<comment type="cofactor">
    <cofactor evidence="3">
        <name>heme b</name>
        <dbReference type="ChEBI" id="CHEBI:60344"/>
    </cofactor>
    <text evidence="3">Binds 2 heme b groups non-covalently.</text>
</comment>
<comment type="subunit">
    <text evidence="1">The main subunits of complex b-c1 are: cytochrome b, cytochrome c1 and the Rieske protein.</text>
</comment>
<comment type="subcellular location">
    <subcellularLocation>
        <location evidence="3">Mitochondrion inner membrane</location>
        <topology evidence="3">Multi-pass membrane protein</topology>
    </subcellularLocation>
</comment>
<comment type="similarity">
    <text evidence="5 6">Belongs to the cytochrome b family.</text>
</comment>
<comment type="caution">
    <text evidence="3">The protein contains an even number of transmembrane helices, fewer than predicted by bioinformatics tools.</text>
</comment>
<name>CYB_EPIBI</name>